<evidence type="ECO:0000250" key="1"/>
<evidence type="ECO:0000250" key="2">
    <source>
        <dbReference type="UniProtKB" id="O13024"/>
    </source>
</evidence>
<evidence type="ECO:0000250" key="3">
    <source>
        <dbReference type="UniProtKB" id="P53352"/>
    </source>
</evidence>
<evidence type="ECO:0000250" key="4">
    <source>
        <dbReference type="UniProtKB" id="Q9NQS7"/>
    </source>
</evidence>
<evidence type="ECO:0000256" key="5">
    <source>
        <dbReference type="SAM" id="MobiDB-lite"/>
    </source>
</evidence>
<evidence type="ECO:0000305" key="6"/>
<organism>
    <name type="scientific">Xenopus laevis</name>
    <name type="common">African clawed frog</name>
    <dbReference type="NCBI Taxonomy" id="8355"/>
    <lineage>
        <taxon>Eukaryota</taxon>
        <taxon>Metazoa</taxon>
        <taxon>Chordata</taxon>
        <taxon>Craniata</taxon>
        <taxon>Vertebrata</taxon>
        <taxon>Euteleostomi</taxon>
        <taxon>Amphibia</taxon>
        <taxon>Batrachia</taxon>
        <taxon>Anura</taxon>
        <taxon>Pipoidea</taxon>
        <taxon>Pipidae</taxon>
        <taxon>Xenopodinae</taxon>
        <taxon>Xenopus</taxon>
        <taxon>Xenopus</taxon>
    </lineage>
</organism>
<sequence length="892" mass="102938">MNDAECLSHLLQVCSRKTEEFVRTLDTKHMVWLLEIEEEARKMFSSDFNAEPELMPKTPSQKRRRKKRTSILPDENRDPSGRRISRRRSSANWSSSVRRLSVRNQIKANDDSIQEGPAQPKRMTRARAQASIMCPPAVEQALPESPSQLCQKSVQVKISEHERRSAEQKLRESEIEDSEMKTDVQPIPEITKDHISEIMNAAGPPPIPDIPAVPVTPENKSRAAGKLKISGSSTPIQTAAVVDLTCESPRPANELVNEQPLNLSNESATPTGSKSDRRSVRRSLVVRKSSSRRASLVSQFSLVSKRESMTREAVRKSIRQSISKKKAAMETSSTSSQRSCHSSIEMVDDEITIKIRPETAPSETVSEEAPAAESPRSSLRSRAFKKIAISNLSESEEPPRRVTRQMVAVDAEPTPETADDAQNNRRKSYKRAVDELSDDERPSEGECSPPRKKTPSPPCPPSKIVKPPPHMKSFLHTVQKNQFLMMTPGSIGKNITLKSFIKRNTPLKPDPKSEEKERQRLDALRKKEEAELQRKQKIEEGKKRKQEELKLRREDRLRKVLQARERVEQLEEEKKKKFEQKFAQIDEKSEKVREDRMAEEKAKKKTMVKKQEEVECRRKQEEEARKLKAKQMEEEERRHQELLQKKREEEEMERQKKMAEAKRLAEQERERQVFAEKERLRAERERERIEREKALQLQRELERAAQEKEQQRREAEERKKREQQQRLEQERLERLRTEQEVKRLQEEQQRKAKEQAAAAAAPVMNVTVDMQNSPACESYEMTPKSYKVPSVKANADNYGMDLNSDDSTDDESQPRKPIPAWASGNLLAQAVSQQYYKPIDADHMYGTIDSPKLEELFNKSKPRYFKRTSSAVWHSPPLSNRHHLAVGYGLKY</sequence>
<proteinExistence type="evidence at transcript level"/>
<accession>Q32N93</accession>
<reference key="1">
    <citation type="submission" date="2005-11" db="EMBL/GenBank/DDBJ databases">
        <authorList>
            <consortium name="NIH - Xenopus Gene Collection (XGC) project"/>
        </authorList>
    </citation>
    <scope>NUCLEOTIDE SEQUENCE [LARGE SCALE MRNA]</scope>
    <source>
        <tissue>Oocyte</tissue>
    </source>
</reference>
<gene>
    <name type="primary">incenp-b</name>
</gene>
<feature type="chain" id="PRO_0000278830" description="Inner centromere protein B">
    <location>
        <begin position="1"/>
        <end position="892"/>
    </location>
</feature>
<feature type="region of interest" description="Disordered" evidence="5">
    <location>
        <begin position="50"/>
        <end position="124"/>
    </location>
</feature>
<feature type="region of interest" description="Disordered" evidence="5">
    <location>
        <begin position="160"/>
        <end position="182"/>
    </location>
</feature>
<feature type="region of interest" description="Disordered" evidence="5">
    <location>
        <begin position="255"/>
        <end position="286"/>
    </location>
</feature>
<feature type="region of interest" description="Disordered" evidence="5">
    <location>
        <begin position="305"/>
        <end position="470"/>
    </location>
</feature>
<feature type="region of interest" description="Disordered" evidence="5">
    <location>
        <begin position="502"/>
        <end position="555"/>
    </location>
</feature>
<feature type="region of interest" description="SAH" evidence="3">
    <location>
        <begin position="512"/>
        <end position="725"/>
    </location>
</feature>
<feature type="region of interest" description="Disordered" evidence="5">
    <location>
        <begin position="569"/>
        <end position="687"/>
    </location>
</feature>
<feature type="region of interest" description="Disordered" evidence="5">
    <location>
        <begin position="702"/>
        <end position="760"/>
    </location>
</feature>
<feature type="region of interest" description="Disordered" evidence="5">
    <location>
        <begin position="797"/>
        <end position="819"/>
    </location>
</feature>
<feature type="region of interest" description="IN box" evidence="6">
    <location>
        <begin position="802"/>
        <end position="876"/>
    </location>
</feature>
<feature type="compositionally biased region" description="Basic residues" evidence="5">
    <location>
        <begin position="60"/>
        <end position="69"/>
    </location>
</feature>
<feature type="compositionally biased region" description="Low complexity" evidence="5">
    <location>
        <begin position="90"/>
        <end position="99"/>
    </location>
</feature>
<feature type="compositionally biased region" description="Polar residues" evidence="5">
    <location>
        <begin position="259"/>
        <end position="272"/>
    </location>
</feature>
<feature type="compositionally biased region" description="Basic and acidic residues" evidence="5">
    <location>
        <begin position="305"/>
        <end position="315"/>
    </location>
</feature>
<feature type="compositionally biased region" description="Basic residues" evidence="5">
    <location>
        <begin position="316"/>
        <end position="326"/>
    </location>
</feature>
<feature type="compositionally biased region" description="Low complexity" evidence="5">
    <location>
        <begin position="332"/>
        <end position="343"/>
    </location>
</feature>
<feature type="compositionally biased region" description="Basic and acidic residues" evidence="5">
    <location>
        <begin position="431"/>
        <end position="444"/>
    </location>
</feature>
<feature type="compositionally biased region" description="Pro residues" evidence="5">
    <location>
        <begin position="455"/>
        <end position="470"/>
    </location>
</feature>
<feature type="compositionally biased region" description="Basic and acidic residues" evidence="5">
    <location>
        <begin position="509"/>
        <end position="555"/>
    </location>
</feature>
<feature type="compositionally biased region" description="Basic and acidic residues" evidence="5">
    <location>
        <begin position="569"/>
        <end position="602"/>
    </location>
</feature>
<feature type="compositionally biased region" description="Basic and acidic residues" evidence="5">
    <location>
        <begin position="609"/>
        <end position="687"/>
    </location>
</feature>
<feature type="compositionally biased region" description="Basic and acidic residues" evidence="5">
    <location>
        <begin position="702"/>
        <end position="754"/>
    </location>
</feature>
<feature type="modified residue" description="Phosphoserine" evidence="1">
    <location>
        <position position="869"/>
    </location>
</feature>
<feature type="modified residue" description="Phosphoserine" evidence="1">
    <location>
        <position position="870"/>
    </location>
</feature>
<name>INCEB_XENLA</name>
<keyword id="KW-0131">Cell cycle</keyword>
<keyword id="KW-0132">Cell division</keyword>
<keyword id="KW-0137">Centromere</keyword>
<keyword id="KW-0158">Chromosome</keyword>
<keyword id="KW-0159">Chromosome partition</keyword>
<keyword id="KW-0963">Cytoplasm</keyword>
<keyword id="KW-0206">Cytoskeleton</keyword>
<keyword id="KW-0995">Kinetochore</keyword>
<keyword id="KW-0493">Microtubule</keyword>
<keyword id="KW-0498">Mitosis</keyword>
<keyword id="KW-0539">Nucleus</keyword>
<keyword id="KW-0597">Phosphoprotein</keyword>
<keyword id="KW-1185">Reference proteome</keyword>
<comment type="function">
    <text evidence="2 3">Component of the chromosomal passenger complex (CPC), a complex that acts as a key regulator of mitosis. The CPC complex has essential functions at the centromere in ensuring correct chromosome alignment and segregation and is required for chromatin-induced microtubule stabilization and spindle assembly. Acts as a scaffold regulating CPC localization and activity. The C-terminus associates with aurkb/aurora-B, the N-terminus associated with cdca8/borealin and/or cdca9/dasra-A tethers the CPC to the inner centromere, and the microtubule binding activity within the central SAH domain directs aurkb/aurora-B toward substrates near microtubules. Activates aurkb.</text>
</comment>
<comment type="subunit">
    <text evidence="2 6">Component of the CPC at least composed of survivin/birc5, incenp, cdca8/borealin and/or cdca9/dasra-A, and aurkb/aurora-B. Interacts (via C-terminus) with aurkb (via N-terminus and kinase domain). Interacts (via N-terminus) with birc5.1, birc5.2, cdca8 and cdca9. Interacts with mtus1 (By similarity).</text>
</comment>
<comment type="subcellular location">
    <subcellularLocation>
        <location evidence="4">Nucleus</location>
    </subcellularLocation>
    <subcellularLocation>
        <location evidence="2">Chromosome</location>
    </subcellularLocation>
    <subcellularLocation>
        <location evidence="2">Chromosome</location>
        <location evidence="2">Centromere</location>
    </subcellularLocation>
    <subcellularLocation>
        <location evidence="2">Cytoplasm</location>
        <location evidence="2">Cytoskeleton</location>
        <location evidence="2">Spindle</location>
    </subcellularLocation>
    <subcellularLocation>
        <location evidence="4">Midbody</location>
    </subcellularLocation>
    <subcellularLocation>
        <location evidence="4">Chromosome</location>
        <location evidence="4">Centromere</location>
        <location evidence="4">Kinetochore</location>
    </subcellularLocation>
    <text evidence="2">Localizes on chromosome arms and inner centromeres from prophase through metaphase and then transferring to the spindle midzone and midbody from anaphase through cytokinesis. Colocalizes to the equatorial cell cortex at anaphase. Colocalizes with AURKB at mitotic chromosomes.</text>
</comment>
<comment type="domain">
    <text evidence="2">The INbox mediates interaction with aurkb/aurora-B.</text>
</comment>
<comment type="domain">
    <text evidence="3">The SAH (single alpha-helix) region is characterized by a high content of charged residues which are predicted to stabilize the alpha-helical structure by ionic bonds. It can refold after extension suggesting an in vivo force-dependent function. The isolated SAH domain is monomeric.</text>
</comment>
<comment type="similarity">
    <text evidence="6">Belongs to the INCENP family.</text>
</comment>
<comment type="caution">
    <text evidence="3">Originally predicted to contain a coiled coil domain but shown to contain a stable SAH domain instead.</text>
</comment>
<protein>
    <recommendedName>
        <fullName>Inner centromere protein B</fullName>
    </recommendedName>
</protein>
<dbReference type="EMBL" id="BC108767">
    <property type="protein sequence ID" value="AAI08768.1"/>
    <property type="molecule type" value="mRNA"/>
</dbReference>
<dbReference type="RefSeq" id="NP_001131043.1">
    <property type="nucleotide sequence ID" value="NM_001137571.1"/>
</dbReference>
<dbReference type="SMR" id="Q32N93"/>
<dbReference type="DNASU" id="398822"/>
<dbReference type="GeneID" id="398822"/>
<dbReference type="KEGG" id="xla:398822"/>
<dbReference type="AGR" id="Xenbase:XB-GENE-990404"/>
<dbReference type="CTD" id="398822"/>
<dbReference type="Xenbase" id="XB-GENE-990404">
    <property type="gene designation" value="incenp.S"/>
</dbReference>
<dbReference type="OrthoDB" id="6123at2759"/>
<dbReference type="Proteomes" id="UP000186698">
    <property type="component" value="Chromosome 4S"/>
</dbReference>
<dbReference type="Bgee" id="398822">
    <property type="expression patterns" value="Expressed in egg cell and 18 other cell types or tissues"/>
</dbReference>
<dbReference type="GO" id="GO:0005694">
    <property type="term" value="C:chromosome"/>
    <property type="evidence" value="ECO:0000250"/>
    <property type="project" value="UniProtKB"/>
</dbReference>
<dbReference type="GO" id="GO:0032133">
    <property type="term" value="C:chromosome passenger complex"/>
    <property type="evidence" value="ECO:0000250"/>
    <property type="project" value="UniProtKB"/>
</dbReference>
<dbReference type="GO" id="GO:0005737">
    <property type="term" value="C:cytoplasm"/>
    <property type="evidence" value="ECO:0007669"/>
    <property type="project" value="UniProtKB-KW"/>
</dbReference>
<dbReference type="GO" id="GO:0000776">
    <property type="term" value="C:kinetochore"/>
    <property type="evidence" value="ECO:0000318"/>
    <property type="project" value="GO_Central"/>
</dbReference>
<dbReference type="GO" id="GO:1990385">
    <property type="term" value="C:meiotic spindle midzone"/>
    <property type="evidence" value="ECO:0000318"/>
    <property type="project" value="GO_Central"/>
</dbReference>
<dbReference type="GO" id="GO:0005874">
    <property type="term" value="C:microtubule"/>
    <property type="evidence" value="ECO:0007669"/>
    <property type="project" value="UniProtKB-KW"/>
</dbReference>
<dbReference type="GO" id="GO:0030496">
    <property type="term" value="C:midbody"/>
    <property type="evidence" value="ECO:0000318"/>
    <property type="project" value="GO_Central"/>
</dbReference>
<dbReference type="GO" id="GO:0005634">
    <property type="term" value="C:nucleus"/>
    <property type="evidence" value="ECO:0000318"/>
    <property type="project" value="GO_Central"/>
</dbReference>
<dbReference type="GO" id="GO:0019901">
    <property type="term" value="F:protein kinase binding"/>
    <property type="evidence" value="ECO:0000250"/>
    <property type="project" value="UniProtKB"/>
</dbReference>
<dbReference type="GO" id="GO:0051257">
    <property type="term" value="P:meiotic spindle midzone assembly"/>
    <property type="evidence" value="ECO:0000318"/>
    <property type="project" value="GO_Central"/>
</dbReference>
<dbReference type="GO" id="GO:0051310">
    <property type="term" value="P:metaphase chromosome alignment"/>
    <property type="evidence" value="ECO:0000318"/>
    <property type="project" value="GO_Central"/>
</dbReference>
<dbReference type="GO" id="GO:0000281">
    <property type="term" value="P:mitotic cytokinesis"/>
    <property type="evidence" value="ECO:0000318"/>
    <property type="project" value="GO_Central"/>
</dbReference>
<dbReference type="GO" id="GO:0051225">
    <property type="term" value="P:spindle assembly"/>
    <property type="evidence" value="ECO:0000250"/>
    <property type="project" value="UniProtKB"/>
</dbReference>
<dbReference type="FunFam" id="1.20.5.3600:FF:000001">
    <property type="entry name" value="inner centromere protein-like"/>
    <property type="match status" value="1"/>
</dbReference>
<dbReference type="Gene3D" id="1.20.5.3600">
    <property type="match status" value="1"/>
</dbReference>
<dbReference type="Gene3D" id="6.10.250.2990">
    <property type="match status" value="1"/>
</dbReference>
<dbReference type="InterPro" id="IPR022006">
    <property type="entry name" value="INCENP_N"/>
</dbReference>
<dbReference type="InterPro" id="IPR005635">
    <property type="entry name" value="Inner_centromere_prot_ARK-bd"/>
</dbReference>
<dbReference type="PANTHER" id="PTHR13142">
    <property type="entry name" value="INNER CENTROMERE PROTEIN"/>
    <property type="match status" value="1"/>
</dbReference>
<dbReference type="PANTHER" id="PTHR13142:SF1">
    <property type="entry name" value="INNER CENTROMERE PROTEIN"/>
    <property type="match status" value="1"/>
</dbReference>
<dbReference type="Pfam" id="PF03941">
    <property type="entry name" value="INCENP_ARK-bind"/>
    <property type="match status" value="1"/>
</dbReference>
<dbReference type="Pfam" id="PF12178">
    <property type="entry name" value="INCENP_N"/>
    <property type="match status" value="1"/>
</dbReference>